<gene>
    <name type="primary">repA2</name>
    <name type="ordered locus">BUsg_PL3</name>
</gene>
<comment type="function">
    <text evidence="1">This protein is essential for plasmid replication; it is involved in copy control functions.</text>
</comment>
<comment type="similarity">
    <text evidence="2">Belongs to the IncFII RepA family.</text>
</comment>
<feature type="chain" id="PRO_0000216231" description="Probable replication-associated protein repA2">
    <location>
        <begin position="1"/>
        <end position="250"/>
    </location>
</feature>
<feature type="sequence conflict" description="In Ref. 1; CAA07295." evidence="2" ref="1">
    <original>Q</original>
    <variation>H</variation>
    <location>
        <position position="140"/>
    </location>
</feature>
<feature type="sequence conflict" description="In Ref. 1; CAA07295." evidence="2" ref="1">
    <original>I</original>
    <variation>T</variation>
    <location>
        <position position="146"/>
    </location>
</feature>
<feature type="sequence conflict" description="In Ref. 1; CAA07295." evidence="2" ref="1">
    <original>P</original>
    <variation>L</variation>
    <location>
        <position position="227"/>
    </location>
</feature>
<reference key="1">
    <citation type="journal article" date="1998" name="FEMS Microbiol. Lett.">
        <title>Structure and evolution of the leucine plasmids carried by the endosymbiont (Buchnera aphidicola) from aphids of the family Aphididae.</title>
        <authorList>
            <person name="Silva F.J."/>
            <person name="van Ham R.C.H.J."/>
            <person name="Sabater B."/>
            <person name="Latorre A."/>
        </authorList>
    </citation>
    <scope>NUCLEOTIDE SEQUENCE [GENOMIC DNA]</scope>
</reference>
<reference key="2">
    <citation type="journal article" date="1999" name="J. Mol. Evol.">
        <title>Genetic characterization of plasmids containing genes encoding enzymes of leucine biosynthesis in endosymbionts (Buchnera) of aphids.</title>
        <authorList>
            <person name="Baumann L."/>
            <person name="Baumann P."/>
            <person name="Moran N.A."/>
            <person name="Sandstroem J.P."/>
            <person name="Thao M.L."/>
        </authorList>
    </citation>
    <scope>NUCLEOTIDE SEQUENCE [LARGE SCALE GENOMIC DNA]</scope>
    <source>
        <strain>Sg</strain>
    </source>
</reference>
<accession>O85062</accession>
<accession>Q9R863</accession>
<evidence type="ECO:0000250" key="1"/>
<evidence type="ECO:0000305" key="2"/>
<proteinExistence type="inferred from homology"/>
<dbReference type="EMBL" id="AJ006876">
    <property type="protein sequence ID" value="CAA07295.1"/>
    <property type="molecule type" value="Genomic_DNA"/>
</dbReference>
<dbReference type="EMBL" id="AF041836">
    <property type="protein sequence ID" value="AAD12592.1"/>
    <property type="molecule type" value="Genomic_DNA"/>
</dbReference>
<dbReference type="RefSeq" id="NP_047179.1">
    <property type="nucleotide sequence ID" value="NC_001910.1"/>
</dbReference>
<dbReference type="Proteomes" id="UP000000416">
    <property type="component" value="Plasmid pLeu-Sg"/>
</dbReference>
<dbReference type="GO" id="GO:0006260">
    <property type="term" value="P:DNA replication"/>
    <property type="evidence" value="ECO:0007669"/>
    <property type="project" value="UniProtKB-KW"/>
</dbReference>
<dbReference type="GO" id="GO:0006276">
    <property type="term" value="P:plasmid maintenance"/>
    <property type="evidence" value="ECO:0007669"/>
    <property type="project" value="UniProtKB-KW"/>
</dbReference>
<dbReference type="InterPro" id="IPR003446">
    <property type="entry name" value="Plasmid_replication_init_RepA"/>
</dbReference>
<dbReference type="NCBIfam" id="NF040977">
    <property type="entry name" value="RepA_IncFII_LM"/>
    <property type="match status" value="1"/>
</dbReference>
<dbReference type="Pfam" id="PF02387">
    <property type="entry name" value="IncFII_repA"/>
    <property type="match status" value="2"/>
</dbReference>
<name>REPA2_BUCAP</name>
<sequence>MPRKNYICNLKPVFNPPKNEKKRSNFIDYAMKKASEIDVARSKLNYTLLAIDPKTGNILPRFRRLNEHRACAMRAIVLAMLYYWNTNSNLVEASIEKLSDECGLSTFSNSGNKSITRASRLITDFMEPMGFIKCKRKKTQSSSNYIPKKIFLTSNFFMLFHISQSTINQYLSEQKQSIKNLKKEKKIFISFSDIRVISKLDEKAARNKILNALIKYYSASELTKIGPQGLKKKIDIEYSNLCKLYKKNNK</sequence>
<geneLocation type="plasmid">
    <name>pLeu-Sg</name>
    <name>pBSg1</name>
</geneLocation>
<protein>
    <recommendedName>
        <fullName>Probable replication-associated protein repA2</fullName>
    </recommendedName>
</protein>
<keyword id="KW-0235">DNA replication</keyword>
<keyword id="KW-0614">Plasmid</keyword>
<keyword id="KW-0615">Plasmid copy control</keyword>
<organism>
    <name type="scientific">Buchnera aphidicola subsp. Schizaphis graminum (strain Sg)</name>
    <dbReference type="NCBI Taxonomy" id="198804"/>
    <lineage>
        <taxon>Bacteria</taxon>
        <taxon>Pseudomonadati</taxon>
        <taxon>Pseudomonadota</taxon>
        <taxon>Gammaproteobacteria</taxon>
        <taxon>Enterobacterales</taxon>
        <taxon>Erwiniaceae</taxon>
        <taxon>Buchnera</taxon>
    </lineage>
</organism>